<dbReference type="EC" id="3.2.1.n1"/>
<dbReference type="EC" id="3.2.1.22"/>
<dbReference type="EMBL" id="CP001071">
    <property type="protein sequence ID" value="ACD05285.1"/>
    <property type="molecule type" value="Genomic_DNA"/>
</dbReference>
<dbReference type="RefSeq" id="WP_012420500.1">
    <property type="nucleotide sequence ID" value="NC_010655.1"/>
</dbReference>
<dbReference type="SMR" id="B2UL12"/>
<dbReference type="STRING" id="349741.Amuc_1463"/>
<dbReference type="CAZy" id="GH110">
    <property type="family name" value="Glycoside Hydrolase Family 110"/>
</dbReference>
<dbReference type="PaxDb" id="349741-Amuc_1463"/>
<dbReference type="KEGG" id="amu:Amuc_1463"/>
<dbReference type="eggNOG" id="COG5434">
    <property type="taxonomic scope" value="Bacteria"/>
</dbReference>
<dbReference type="HOGENOM" id="CLU_017693_0_0_0"/>
<dbReference type="Proteomes" id="UP000001031">
    <property type="component" value="Chromosome"/>
</dbReference>
<dbReference type="GO" id="GO:0004557">
    <property type="term" value="F:alpha-galactosidase activity"/>
    <property type="evidence" value="ECO:0007669"/>
    <property type="project" value="UniProtKB-EC"/>
</dbReference>
<dbReference type="Gene3D" id="2.160.20.10">
    <property type="entry name" value="Single-stranded right-handed beta-helix, Pectin lyase-like"/>
    <property type="match status" value="3"/>
</dbReference>
<dbReference type="InterPro" id="IPR056441">
    <property type="entry name" value="Beta-barrel_GLAA-B_II"/>
</dbReference>
<dbReference type="InterPro" id="IPR039448">
    <property type="entry name" value="Beta_helix"/>
</dbReference>
<dbReference type="InterPro" id="IPR012334">
    <property type="entry name" value="Pectin_lyas_fold"/>
</dbReference>
<dbReference type="InterPro" id="IPR011050">
    <property type="entry name" value="Pectin_lyase_fold/virulence"/>
</dbReference>
<dbReference type="Pfam" id="PF23764">
    <property type="entry name" value="Beta-barrel_GLAA-B_II"/>
    <property type="match status" value="1"/>
</dbReference>
<dbReference type="Pfam" id="PF13229">
    <property type="entry name" value="Beta_helix"/>
    <property type="match status" value="1"/>
</dbReference>
<dbReference type="SUPFAM" id="SSF51126">
    <property type="entry name" value="Pectin lyase-like"/>
    <property type="match status" value="1"/>
</dbReference>
<comment type="function">
    <text evidence="1">Alpha-galactosidase that specifically removes branched alpha-1,3-linked galactose residues present in blood group B antigens. Has no activity toward linear alpha-1,3-linked galactose residues (By similarity).</text>
</comment>
<comment type="catalytic activity">
    <reaction>
        <text>Hydrolysis of terminal, non-reducing branched (1-&gt;3)-alpha-D-galactosidic residues, producing free D-galactose.</text>
        <dbReference type="EC" id="3.2.1.n1"/>
    </reaction>
</comment>
<comment type="catalytic activity">
    <reaction>
        <text>Hydrolysis of terminal, non-reducing alpha-D-galactose residues in alpha-D-galactosides, including galactose oligosaccharides, galactomannans and galactolipids.</text>
        <dbReference type="EC" id="3.2.1.22"/>
    </reaction>
</comment>
<comment type="similarity">
    <text evidence="4">Belongs to the glycosyl hydrolase 110 family. A subfamily.</text>
</comment>
<proteinExistence type="inferred from homology"/>
<evidence type="ECO:0000250" key="1"/>
<evidence type="ECO:0000255" key="2"/>
<evidence type="ECO:0000256" key="3">
    <source>
        <dbReference type="SAM" id="MobiDB-lite"/>
    </source>
</evidence>
<evidence type="ECO:0000305" key="4"/>
<name>GLAA_AKKM8</name>
<organism>
    <name type="scientific">Akkermansia muciniphila (strain ATCC BAA-835 / DSM 22959 / JCM 33894 / BCRC 81048 / CCUG 64013 / CIP 107961 / Muc)</name>
    <dbReference type="NCBI Taxonomy" id="349741"/>
    <lineage>
        <taxon>Bacteria</taxon>
        <taxon>Pseudomonadati</taxon>
        <taxon>Verrucomicrobiota</taxon>
        <taxon>Verrucomicrobiia</taxon>
        <taxon>Verrucomicrobiales</taxon>
        <taxon>Akkermansiaceae</taxon>
        <taxon>Akkermansia</taxon>
    </lineage>
</organism>
<reference key="1">
    <citation type="journal article" date="2011" name="PLoS ONE">
        <title>The genome of Akkermansia muciniphila, a dedicated intestinal mucin degrader, and its use in exploring intestinal metagenomes.</title>
        <authorList>
            <person name="van Passel M.W."/>
            <person name="Kant R."/>
            <person name="Zoetendal E.G."/>
            <person name="Plugge C.M."/>
            <person name="Derrien M."/>
            <person name="Malfatti S.A."/>
            <person name="Chain P.S."/>
            <person name="Woyke T."/>
            <person name="Palva A."/>
            <person name="de Vos W.M."/>
            <person name="Smidt H."/>
        </authorList>
    </citation>
    <scope>NUCLEOTIDE SEQUENCE [LARGE SCALE GENOMIC DNA]</scope>
    <source>
        <strain>ATCC BAA-835 / DSM 22959 / JCM 33894 / BCRC 81048 / CCUG 64013 / CIP 107961 / Muc</strain>
    </source>
</reference>
<protein>
    <recommendedName>
        <fullName>Alpha-1,3-galactosidase A</fullName>
        <ecNumber>3.2.1.n1</ecNumber>
    </recommendedName>
    <alternativeName>
        <fullName>Exo-alpha-galactosidase A</fullName>
        <ecNumber>3.2.1.22</ecNumber>
    </alternativeName>
</protein>
<keyword id="KW-0326">Glycosidase</keyword>
<keyword id="KW-0378">Hydrolase</keyword>
<keyword id="KW-1185">Reference proteome</keyword>
<keyword id="KW-0677">Repeat</keyword>
<keyword id="KW-0732">Signal</keyword>
<sequence>MQNPVASLLFILAMLTGPCPAADYPERTERTQSAGNHVWHIDPDKGNDGNPGTAPSTAWKSMAPANRLIMARGDTLVIHPGEHAVSLALMGEGSKQAPVTIRFMPGRHIFKHGALMTGKPQISNTNDAPNEPKAMAIRLMEAKNIRLEGKPGATDILLEGKAIFVCMEHAENVSLNGLGFDYLHPTMGEFLVTEVEGDTMKATIPDGTLYTVKDGNLTWHGPGWEFRMGGYSKVFDSASGTFQGRFDPGKTVIRELSPGKISITFKEGSPTMKPGQSYQNRNTRRDCCGFFQYRSKNILWNNCHIYYMHGMGVVSQFCENIMFSHLKIAPRPRSLRTNSSWADNLHFSGCRGKIIVKDCVLGASHDDAVNVHGTHLRIIDRPAPNKITVRFMHPQTFGFDAFAAGDRIDYVSCNTLVPYASNTVSGVKQLNEKEIELTLQHPNPGNIQPDDVVENVTWTPSVHISNTVCRHIPTRGFLLTTRKPVLVERCRFEKTGMPAILVEDDASGWYESGVVRNMTISRNTFIQCGEAVIQIVPHAPRPEGDVHRNITITGNTFDLKNGTAIRIRHTGDVKAEKNTFTKDGKKIPEEKAVDIR</sequence>
<feature type="signal peptide" evidence="2">
    <location>
        <begin position="1"/>
        <end position="21"/>
    </location>
</feature>
<feature type="chain" id="PRO_5000370228" description="Alpha-1,3-galactosidase A">
    <location>
        <begin position="22"/>
        <end position="596"/>
    </location>
</feature>
<feature type="repeat" description="PbH1 1">
    <location>
        <begin position="351"/>
        <end position="373"/>
    </location>
</feature>
<feature type="repeat" description="PbH1 2">
    <location>
        <begin position="482"/>
        <end position="504"/>
    </location>
</feature>
<feature type="repeat" description="PbH1 3">
    <location>
        <begin position="515"/>
        <end position="537"/>
    </location>
</feature>
<feature type="repeat" description="PbH1 4">
    <location>
        <begin position="547"/>
        <end position="569"/>
    </location>
</feature>
<feature type="region of interest" description="Disordered" evidence="3">
    <location>
        <begin position="23"/>
        <end position="57"/>
    </location>
</feature>
<gene>
    <name type="primary">glaA</name>
    <name type="ordered locus">Amuc_1463</name>
</gene>
<accession>B2UL12</accession>